<sequence length="46" mass="4829">LNLGVGAYREYLPIEGLAAFNKVATVQGLSGTGSLRQALYDSISSK</sequence>
<protein>
    <recommendedName>
        <fullName evidence="2">Aspartate aminotransferase 1</fullName>
        <ecNumber>2.6.1.1</ecNumber>
    </recommendedName>
    <alternativeName>
        <fullName evidence="2">Transaminase A</fullName>
    </alternativeName>
</protein>
<reference key="1">
    <citation type="journal article" date="2008" name="J. Proteomics">
        <title>A proteomics approach to identify proteins differentially expressed in Douglas-fir seedlings infected by Phellinus sulphurascens.</title>
        <authorList>
            <person name="Islam M.A."/>
            <person name="Sturrock R.N."/>
            <person name="Ekramoddoullah A.K.M."/>
        </authorList>
    </citation>
    <scope>IDENTIFICATION BY MASS SPECTROMETRY</scope>
</reference>
<organism>
    <name type="scientific">Pseudotsuga menziesii</name>
    <name type="common">Douglas-fir</name>
    <name type="synonym">Abies menziesii</name>
    <dbReference type="NCBI Taxonomy" id="3357"/>
    <lineage>
        <taxon>Eukaryota</taxon>
        <taxon>Viridiplantae</taxon>
        <taxon>Streptophyta</taxon>
        <taxon>Embryophyta</taxon>
        <taxon>Tracheophyta</taxon>
        <taxon>Spermatophyta</taxon>
        <taxon>Pinopsida</taxon>
        <taxon>Pinidae</taxon>
        <taxon>Conifers I</taxon>
        <taxon>Pinales</taxon>
        <taxon>Pinaceae</taxon>
        <taxon>Pseudotsuga</taxon>
    </lineage>
</organism>
<name>AAT1_PSEMZ</name>
<keyword id="KW-0032">Aminotransferase</keyword>
<keyword id="KW-0663">Pyridoxal phosphate</keyword>
<keyword id="KW-0808">Transferase</keyword>
<proteinExistence type="evidence at protein level"/>
<accession>P85906</accession>
<evidence type="ECO:0000250" key="1"/>
<evidence type="ECO:0000250" key="2">
    <source>
        <dbReference type="UniProtKB" id="P28011"/>
    </source>
</evidence>
<evidence type="ECO:0000255" key="3"/>
<evidence type="ECO:0000303" key="4">
    <source>
    </source>
</evidence>
<evidence type="ECO:0000305" key="5"/>
<dbReference type="EC" id="2.6.1.1"/>
<dbReference type="GO" id="GO:0004069">
    <property type="term" value="F:L-aspartate:2-oxoglutarate aminotransferase activity"/>
    <property type="evidence" value="ECO:0007669"/>
    <property type="project" value="UniProtKB-EC"/>
</dbReference>
<feature type="chain" id="PRO_0000347318" description="Aspartate aminotransferase 1">
    <location>
        <begin position="1" status="less than"/>
        <end position="46" status="greater than"/>
    </location>
</feature>
<feature type="non-consecutive residues" evidence="4">
    <location>
        <begin position="9"/>
        <end position="10"/>
    </location>
</feature>
<feature type="non-consecutive residues" evidence="4">
    <location>
        <begin position="22"/>
        <end position="23"/>
    </location>
</feature>
<feature type="non-consecutive residues" evidence="4">
    <location>
        <begin position="36"/>
        <end position="37"/>
    </location>
</feature>
<feature type="non-terminal residue" evidence="4">
    <location>
        <position position="1"/>
    </location>
</feature>
<feature type="non-terminal residue" evidence="4">
    <location>
        <position position="46"/>
    </location>
</feature>
<comment type="function">
    <text evidence="1">Important for the metabolism of amino acids and Krebs-cycle related organic acids. In plants, it is involved in nitrogen metabolism and in aspects of carbon and energy metabolism (By similarity).</text>
</comment>
<comment type="catalytic activity">
    <reaction evidence="5">
        <text>L-aspartate + 2-oxoglutarate = oxaloacetate + L-glutamate</text>
        <dbReference type="Rhea" id="RHEA:21824"/>
        <dbReference type="ChEBI" id="CHEBI:16452"/>
        <dbReference type="ChEBI" id="CHEBI:16810"/>
        <dbReference type="ChEBI" id="CHEBI:29985"/>
        <dbReference type="ChEBI" id="CHEBI:29991"/>
        <dbReference type="EC" id="2.6.1.1"/>
    </reaction>
</comment>
<comment type="cofactor">
    <cofactor evidence="1">
        <name>pyridoxal 5'-phosphate</name>
        <dbReference type="ChEBI" id="CHEBI:597326"/>
    </cofactor>
</comment>
<comment type="subunit">
    <text evidence="2">Homodimer.</text>
</comment>
<comment type="miscellaneous">
    <text evidence="5">In eukaryotes there are cytoplasmic, mitochondrial and chloroplastic isozymes.</text>
</comment>
<comment type="similarity">
    <text evidence="3">Belongs to the class-I pyridoxal-phosphate-dependent aminotransferase family.</text>
</comment>